<reference key="1">
    <citation type="journal article" date="1976" name="Proc. Natl. Acad. Sci. U.S.A.">
        <title>Isolation and structure of an untriakontapeptide with opiate activity from camel pituitary glands.</title>
        <authorList>
            <person name="Li C.H."/>
            <person name="Chung D."/>
        </authorList>
    </citation>
    <scope>PROTEIN SEQUENCE</scope>
</reference>
<sequence>YGGFMTSEKSQTPLVTLFKNAIIKNAHKKGQ</sequence>
<dbReference type="PIR" id="A01468">
    <property type="entry name" value="OECMB"/>
</dbReference>
<dbReference type="SMR" id="P01203"/>
<dbReference type="STRING" id="9838.ENSCDRP00005014140"/>
<dbReference type="GO" id="GO:0005615">
    <property type="term" value="C:extracellular space"/>
    <property type="evidence" value="ECO:0007669"/>
    <property type="project" value="TreeGrafter"/>
</dbReference>
<dbReference type="GO" id="GO:0030141">
    <property type="term" value="C:secretory granule"/>
    <property type="evidence" value="ECO:0007669"/>
    <property type="project" value="TreeGrafter"/>
</dbReference>
<dbReference type="GO" id="GO:0001664">
    <property type="term" value="F:G protein-coupled receptor binding"/>
    <property type="evidence" value="ECO:0007669"/>
    <property type="project" value="TreeGrafter"/>
</dbReference>
<dbReference type="GO" id="GO:0007218">
    <property type="term" value="P:neuropeptide signaling pathway"/>
    <property type="evidence" value="ECO:0007669"/>
    <property type="project" value="UniProtKB-KW"/>
</dbReference>
<dbReference type="GO" id="GO:2000852">
    <property type="term" value="P:regulation of corticosterone secretion"/>
    <property type="evidence" value="ECO:0007669"/>
    <property type="project" value="TreeGrafter"/>
</dbReference>
<dbReference type="InterPro" id="IPR013532">
    <property type="entry name" value="Opioid_neuropept"/>
</dbReference>
<dbReference type="InterPro" id="IPR050878">
    <property type="entry name" value="POMC-derived_peptides"/>
</dbReference>
<dbReference type="PANTHER" id="PTHR11416">
    <property type="entry name" value="PRO-OPIOMELANOCORTIN"/>
    <property type="match status" value="1"/>
</dbReference>
<dbReference type="PANTHER" id="PTHR11416:SF7">
    <property type="entry name" value="PRO-OPIOMELANOCORTIN"/>
    <property type="match status" value="1"/>
</dbReference>
<dbReference type="Pfam" id="PF08035">
    <property type="entry name" value="Op_neuropeptide"/>
    <property type="match status" value="1"/>
</dbReference>
<dbReference type="SMART" id="SM01365">
    <property type="entry name" value="Op_neuropeptide"/>
    <property type="match status" value="1"/>
</dbReference>
<organism>
    <name type="scientific">Camelus dromedarius</name>
    <name type="common">Dromedary</name>
    <name type="synonym">Arabian camel</name>
    <dbReference type="NCBI Taxonomy" id="9838"/>
    <lineage>
        <taxon>Eukaryota</taxon>
        <taxon>Metazoa</taxon>
        <taxon>Chordata</taxon>
        <taxon>Craniata</taxon>
        <taxon>Vertebrata</taxon>
        <taxon>Euteleostomi</taxon>
        <taxon>Mammalia</taxon>
        <taxon>Eutheria</taxon>
        <taxon>Laurasiatheria</taxon>
        <taxon>Artiodactyla</taxon>
        <taxon>Tylopoda</taxon>
        <taxon>Camelidae</taxon>
        <taxon>Camelus</taxon>
    </lineage>
</organism>
<comment type="function">
    <text>Beta-endorphin and Met-enkephalin are endogenous opiates.</text>
</comment>
<comment type="subcellular location">
    <subcellularLocation>
        <location>Secreted</location>
    </subcellularLocation>
</comment>
<comment type="similarity">
    <text evidence="1">Belongs to the POMC family.</text>
</comment>
<evidence type="ECO:0000305" key="1"/>
<name>COLI_CAMDR</name>
<accession>P01203</accession>
<keyword id="KW-0903">Direct protein sequencing</keyword>
<keyword id="KW-0257">Endorphin</keyword>
<keyword id="KW-0964">Secreted</keyword>
<proteinExistence type="evidence at protein level"/>
<protein>
    <recommendedName>
        <fullName>Beta-endorphin</fullName>
    </recommendedName>
    <component>
        <recommendedName>
            <fullName>Met-enkephalin</fullName>
        </recommendedName>
    </component>
</protein>
<feature type="peptide" id="PRO_0000045866" description="Beta-endorphin">
    <location>
        <begin position="1"/>
        <end position="31"/>
    </location>
</feature>
<feature type="peptide" id="PRO_0000024954" description="Met-enkephalin">
    <location>
        <begin position="1"/>
        <end position="5"/>
    </location>
</feature>
<gene>
    <name type="primary">POMC</name>
</gene>